<feature type="transit peptide" description="Mitochondrion" evidence="1">
    <location>
        <begin position="1"/>
        <end position="31"/>
    </location>
</feature>
<feature type="chain" id="PRO_0000363579" description="Pentatricopeptide repeat-containing protein At5g61990, mitochondrial">
    <location>
        <begin position="32"/>
        <end position="974"/>
    </location>
</feature>
<feature type="repeat" description="PPR 1">
    <location>
        <begin position="96"/>
        <end position="130"/>
    </location>
</feature>
<feature type="repeat" description="PPR 2">
    <location>
        <begin position="150"/>
        <end position="184"/>
    </location>
</feature>
<feature type="repeat" description="PPR 3">
    <location>
        <begin position="185"/>
        <end position="219"/>
    </location>
</feature>
<feature type="repeat" description="PPR 4">
    <location>
        <begin position="220"/>
        <end position="250"/>
    </location>
</feature>
<feature type="repeat" description="PPR 5">
    <location>
        <begin position="257"/>
        <end position="275"/>
    </location>
</feature>
<feature type="repeat" description="PPR 6">
    <location>
        <begin position="276"/>
        <end position="310"/>
    </location>
</feature>
<feature type="repeat" description="PPR 7">
    <location>
        <begin position="311"/>
        <end position="345"/>
    </location>
</feature>
<feature type="repeat" description="PPR 8">
    <location>
        <begin position="346"/>
        <end position="380"/>
    </location>
</feature>
<feature type="repeat" description="PPR 9">
    <location>
        <begin position="381"/>
        <end position="415"/>
    </location>
</feature>
<feature type="repeat" description="PPR 10">
    <location>
        <begin position="416"/>
        <end position="450"/>
    </location>
</feature>
<feature type="repeat" description="PPR 11">
    <location>
        <begin position="451"/>
        <end position="485"/>
    </location>
</feature>
<feature type="repeat" description="PPR 12">
    <location>
        <begin position="486"/>
        <end position="520"/>
    </location>
</feature>
<feature type="repeat" description="PPR 13">
    <location>
        <begin position="521"/>
        <end position="555"/>
    </location>
</feature>
<feature type="repeat" description="PPR 14">
    <location>
        <begin position="556"/>
        <end position="590"/>
    </location>
</feature>
<feature type="repeat" description="PPR 15">
    <location>
        <begin position="591"/>
        <end position="625"/>
    </location>
</feature>
<feature type="repeat" description="PPR 16">
    <location>
        <begin position="626"/>
        <end position="660"/>
    </location>
</feature>
<feature type="repeat" description="PPR 17">
    <location>
        <begin position="661"/>
        <end position="695"/>
    </location>
</feature>
<feature type="repeat" description="PPR 18">
    <location>
        <begin position="696"/>
        <end position="730"/>
    </location>
</feature>
<feature type="repeat" description="PPR 19">
    <location>
        <begin position="731"/>
        <end position="761"/>
    </location>
</feature>
<feature type="repeat" description="PPR 20">
    <location>
        <begin position="765"/>
        <end position="799"/>
    </location>
</feature>
<feature type="repeat" description="PPR 21">
    <location>
        <begin position="804"/>
        <end position="838"/>
    </location>
</feature>
<feature type="repeat" description="PPR 22">
    <location>
        <begin position="839"/>
        <end position="873"/>
    </location>
</feature>
<feature type="repeat" description="PPR 23">
    <location>
        <begin position="874"/>
        <end position="908"/>
    </location>
</feature>
<feature type="repeat" description="PPR 24">
    <location>
        <begin position="914"/>
        <end position="948"/>
    </location>
</feature>
<feature type="sequence conflict" description="In Ref. 3; AAK64156." evidence="2" ref="3">
    <original>G</original>
    <variation>E</variation>
    <location>
        <position position="165"/>
    </location>
</feature>
<feature type="sequence conflict" description="In Ref. 3; AAP40495." evidence="2" ref="3">
    <original>G</original>
    <variation>E</variation>
    <location>
        <position position="571"/>
    </location>
</feature>
<dbReference type="EMBL" id="AB016880">
    <property type="protein sequence ID" value="BAB10161.1"/>
    <property type="molecule type" value="Genomic_DNA"/>
</dbReference>
<dbReference type="EMBL" id="CP002688">
    <property type="protein sequence ID" value="AED97546.1"/>
    <property type="molecule type" value="Genomic_DNA"/>
</dbReference>
<dbReference type="EMBL" id="AY039979">
    <property type="protein sequence ID" value="AAK64156.1"/>
    <property type="molecule type" value="mRNA"/>
</dbReference>
<dbReference type="EMBL" id="BT008689">
    <property type="protein sequence ID" value="AAP40495.1"/>
    <property type="molecule type" value="mRNA"/>
</dbReference>
<dbReference type="RefSeq" id="NP_568948.1">
    <property type="nucleotide sequence ID" value="NM_125592.2"/>
</dbReference>
<dbReference type="SMR" id="Q9FIT7"/>
<dbReference type="FunCoup" id="Q9FIT7">
    <property type="interactions" value="17"/>
</dbReference>
<dbReference type="PaxDb" id="3702-AT5G61990.1"/>
<dbReference type="ProteomicsDB" id="249323"/>
<dbReference type="EnsemblPlants" id="AT5G61990.1">
    <property type="protein sequence ID" value="AT5G61990.1"/>
    <property type="gene ID" value="AT5G61990"/>
</dbReference>
<dbReference type="GeneID" id="836320"/>
<dbReference type="Gramene" id="AT5G61990.1">
    <property type="protein sequence ID" value="AT5G61990.1"/>
    <property type="gene ID" value="AT5G61990"/>
</dbReference>
<dbReference type="KEGG" id="ath:AT5G61990"/>
<dbReference type="Araport" id="AT5G61990"/>
<dbReference type="TAIR" id="AT5G61990"/>
<dbReference type="eggNOG" id="KOG4197">
    <property type="taxonomic scope" value="Eukaryota"/>
</dbReference>
<dbReference type="HOGENOM" id="CLU_002706_49_9_1"/>
<dbReference type="InParanoid" id="Q9FIT7"/>
<dbReference type="OMA" id="GFCRVGA"/>
<dbReference type="PhylomeDB" id="Q9FIT7"/>
<dbReference type="PRO" id="PR:Q9FIT7"/>
<dbReference type="Proteomes" id="UP000006548">
    <property type="component" value="Chromosome 5"/>
</dbReference>
<dbReference type="ExpressionAtlas" id="Q9FIT7">
    <property type="expression patterns" value="baseline and differential"/>
</dbReference>
<dbReference type="GO" id="GO:0005739">
    <property type="term" value="C:mitochondrion"/>
    <property type="evidence" value="ECO:0007669"/>
    <property type="project" value="UniProtKB-SubCell"/>
</dbReference>
<dbReference type="FunFam" id="1.25.40.10:FF:000558">
    <property type="entry name" value="Pentatricopeptide repeat-containing protein At5g39710"/>
    <property type="match status" value="1"/>
</dbReference>
<dbReference type="Gene3D" id="1.25.40.10">
    <property type="entry name" value="Tetratricopeptide repeat domain"/>
    <property type="match status" value="11"/>
</dbReference>
<dbReference type="InterPro" id="IPR002885">
    <property type="entry name" value="Pentatricopeptide_rpt"/>
</dbReference>
<dbReference type="InterPro" id="IPR050872">
    <property type="entry name" value="PPR_P_subfamily"/>
</dbReference>
<dbReference type="InterPro" id="IPR011990">
    <property type="entry name" value="TPR-like_helical_dom_sf"/>
</dbReference>
<dbReference type="NCBIfam" id="TIGR00756">
    <property type="entry name" value="PPR"/>
    <property type="match status" value="17"/>
</dbReference>
<dbReference type="PANTHER" id="PTHR46128">
    <property type="entry name" value="MITOCHONDRIAL GROUP I INTRON SPLICING FACTOR CCM1"/>
    <property type="match status" value="1"/>
</dbReference>
<dbReference type="PANTHER" id="PTHR46128:SF350">
    <property type="entry name" value="PENTACOTRIPEPTIDE-REPEAT REGION OF PRORP DOMAIN-CONTAINING PROTEIN"/>
    <property type="match status" value="1"/>
</dbReference>
<dbReference type="Pfam" id="PF01535">
    <property type="entry name" value="PPR"/>
    <property type="match status" value="4"/>
</dbReference>
<dbReference type="Pfam" id="PF12854">
    <property type="entry name" value="PPR_1"/>
    <property type="match status" value="1"/>
</dbReference>
<dbReference type="Pfam" id="PF13041">
    <property type="entry name" value="PPR_2"/>
    <property type="match status" value="6"/>
</dbReference>
<dbReference type="Pfam" id="PF13812">
    <property type="entry name" value="PPR_3"/>
    <property type="match status" value="2"/>
</dbReference>
<dbReference type="SUPFAM" id="SSF48452">
    <property type="entry name" value="TPR-like"/>
    <property type="match status" value="1"/>
</dbReference>
<dbReference type="PROSITE" id="PS51375">
    <property type="entry name" value="PPR"/>
    <property type="match status" value="23"/>
</dbReference>
<organism>
    <name type="scientific">Arabidopsis thaliana</name>
    <name type="common">Mouse-ear cress</name>
    <dbReference type="NCBI Taxonomy" id="3702"/>
    <lineage>
        <taxon>Eukaryota</taxon>
        <taxon>Viridiplantae</taxon>
        <taxon>Streptophyta</taxon>
        <taxon>Embryophyta</taxon>
        <taxon>Tracheophyta</taxon>
        <taxon>Spermatophyta</taxon>
        <taxon>Magnoliopsida</taxon>
        <taxon>eudicotyledons</taxon>
        <taxon>Gunneridae</taxon>
        <taxon>Pentapetalae</taxon>
        <taxon>rosids</taxon>
        <taxon>malvids</taxon>
        <taxon>Brassicales</taxon>
        <taxon>Brassicaceae</taxon>
        <taxon>Camelineae</taxon>
        <taxon>Arabidopsis</taxon>
    </lineage>
</organism>
<name>PP442_ARATH</name>
<accession>Q9FIT7</accession>
<accession>Q7Y1Z6</accession>
<accession>Q94BP1</accession>
<evidence type="ECO:0000255" key="1"/>
<evidence type="ECO:0000305" key="2"/>
<proteinExistence type="evidence at transcript level"/>
<reference key="1">
    <citation type="journal article" date="1998" name="DNA Res.">
        <title>Structural analysis of Arabidopsis thaliana chromosome 5. VII. Sequence features of the regions of 1,013,767 bp covered by sixteen physically assigned P1 and TAC clones.</title>
        <authorList>
            <person name="Nakamura Y."/>
            <person name="Sato S."/>
            <person name="Asamizu E."/>
            <person name="Kaneko T."/>
            <person name="Kotani H."/>
            <person name="Miyajima N."/>
            <person name="Tabata S."/>
        </authorList>
    </citation>
    <scope>NUCLEOTIDE SEQUENCE [LARGE SCALE GENOMIC DNA]</scope>
    <source>
        <strain>cv. Columbia</strain>
    </source>
</reference>
<reference key="2">
    <citation type="journal article" date="2017" name="Plant J.">
        <title>Araport11: a complete reannotation of the Arabidopsis thaliana reference genome.</title>
        <authorList>
            <person name="Cheng C.Y."/>
            <person name="Krishnakumar V."/>
            <person name="Chan A.P."/>
            <person name="Thibaud-Nissen F."/>
            <person name="Schobel S."/>
            <person name="Town C.D."/>
        </authorList>
    </citation>
    <scope>GENOME REANNOTATION</scope>
    <source>
        <strain>cv. Columbia</strain>
    </source>
</reference>
<reference key="3">
    <citation type="journal article" date="2003" name="Science">
        <title>Empirical analysis of transcriptional activity in the Arabidopsis genome.</title>
        <authorList>
            <person name="Yamada K."/>
            <person name="Lim J."/>
            <person name="Dale J.M."/>
            <person name="Chen H."/>
            <person name="Shinn P."/>
            <person name="Palm C.J."/>
            <person name="Southwick A.M."/>
            <person name="Wu H.C."/>
            <person name="Kim C.J."/>
            <person name="Nguyen M."/>
            <person name="Pham P.K."/>
            <person name="Cheuk R.F."/>
            <person name="Karlin-Newmann G."/>
            <person name="Liu S.X."/>
            <person name="Lam B."/>
            <person name="Sakano H."/>
            <person name="Wu T."/>
            <person name="Yu G."/>
            <person name="Miranda M."/>
            <person name="Quach H.L."/>
            <person name="Tripp M."/>
            <person name="Chang C.H."/>
            <person name="Lee J.M."/>
            <person name="Toriumi M.J."/>
            <person name="Chan M.M."/>
            <person name="Tang C.C."/>
            <person name="Onodera C.S."/>
            <person name="Deng J.M."/>
            <person name="Akiyama K."/>
            <person name="Ansari Y."/>
            <person name="Arakawa T."/>
            <person name="Banh J."/>
            <person name="Banno F."/>
            <person name="Bowser L."/>
            <person name="Brooks S.Y."/>
            <person name="Carninci P."/>
            <person name="Chao Q."/>
            <person name="Choy N."/>
            <person name="Enju A."/>
            <person name="Goldsmith A.D."/>
            <person name="Gurjal M."/>
            <person name="Hansen N.F."/>
            <person name="Hayashizaki Y."/>
            <person name="Johnson-Hopson C."/>
            <person name="Hsuan V.W."/>
            <person name="Iida K."/>
            <person name="Karnes M."/>
            <person name="Khan S."/>
            <person name="Koesema E."/>
            <person name="Ishida J."/>
            <person name="Jiang P.X."/>
            <person name="Jones T."/>
            <person name="Kawai J."/>
            <person name="Kamiya A."/>
            <person name="Meyers C."/>
            <person name="Nakajima M."/>
            <person name="Narusaka M."/>
            <person name="Seki M."/>
            <person name="Sakurai T."/>
            <person name="Satou M."/>
            <person name="Tamse R."/>
            <person name="Vaysberg M."/>
            <person name="Wallender E.K."/>
            <person name="Wong C."/>
            <person name="Yamamura Y."/>
            <person name="Yuan S."/>
            <person name="Shinozaki K."/>
            <person name="Davis R.W."/>
            <person name="Theologis A."/>
            <person name="Ecker J.R."/>
        </authorList>
    </citation>
    <scope>NUCLEOTIDE SEQUENCE [LARGE SCALE MRNA]</scope>
    <source>
        <strain>cv. Columbia</strain>
    </source>
</reference>
<reference key="4">
    <citation type="journal article" date="2004" name="Plant Cell">
        <title>Genome-wide analysis of Arabidopsis pentatricopeptide repeat proteins reveals their essential role in organelle biogenesis.</title>
        <authorList>
            <person name="Lurin C."/>
            <person name="Andres C."/>
            <person name="Aubourg S."/>
            <person name="Bellaoui M."/>
            <person name="Bitton F."/>
            <person name="Bruyere C."/>
            <person name="Caboche M."/>
            <person name="Debast C."/>
            <person name="Gualberto J."/>
            <person name="Hoffmann B."/>
            <person name="Lecharny A."/>
            <person name="Le Ret M."/>
            <person name="Martin-Magniette M.-L."/>
            <person name="Mireau H."/>
            <person name="Peeters N."/>
            <person name="Renou J.-P."/>
            <person name="Szurek B."/>
            <person name="Taconnat L."/>
            <person name="Small I."/>
        </authorList>
    </citation>
    <scope>GENE FAMILY</scope>
</reference>
<sequence length="974" mass="108809">MMGSMLFRKRTLVTRANFLLFRSFSVNVEKLSDASAEIAGILKQENWRDTLVSSNLSIEINPEVVLSVLRSKRVDDPSKLLSFFNWVDSQKVTEQKLDSFSFLALDLCNFGSFEKALSVVERMIERNWPVAEVWSSIVRCSQEFVGKSDDGVLFGILFDGYIAKGYIEEAVFVFSSSMGLELVPRLSRCKVLLDALLRWNRLDLFWDVYKGMVERNVVFDVKTYHMLIIAHCRAGNVQLGKDVLFKTEKEFRTATLNVDGALKLKESMICKGLVPLKYTYDVLIDGLCKIKRLEDAKSLLVEMDSLGVSLDNHTYSLLIDGLLKGRNADAAKGLVHEMVSHGINIKPYMYDCCICVMSKEGVMEKAKALFDGMIASGLIPQAQAYASLIEGYCREKNVRQGYELLVEMKKRNIVISPYTYGTVVKGMCSSGDLDGAYNIVKEMIASGCRPNVVIYTTLIKTFLQNSRFGDAMRVLKEMKEQGIAPDIFCYNSLIIGLSKAKRMDEARSFLVEMVENGLKPNAFTYGAFISGYIEASEFASADKYVKEMRECGVLPNKVLCTGLINEYCKKGKVIEACSAYRSMVDQGILGDAKTYTVLMNGLFKNDKVDDAEEIFREMRGKGIAPDVFSYGVLINGFSKLGNMQKASSIFDEMVEEGLTPNVIIYNMLLGGFCRSGEIEKAKELLDEMSVKGLHPNAVTYCTIIDGYCKSGDLAEAFRLFDEMKLKGLVPDSFVYTTLVDGCCRLNDVERAITIFGTNKKGCASSTAPFNALINWVFKFGKTELKTEVLNRLMDGSFDRFGKPNDVTYNIMIDYLCKEGNLEAAKELFHQMQNANLMPTVITYTSLLNGYDKMGRRAEMFPVFDEAIAAGIEPDHIMYSVIINAFLKEGMTTKALVLVDQMFAKNAVDDGCKLSISTCRALLSGFAKVGEMEVAEKVMENMVRLQYIPDSATVIELINESCISSNQRVEADAVP</sequence>
<gene>
    <name type="ordered locus">At5g61990</name>
    <name type="ORF">MTG10.2</name>
</gene>
<keyword id="KW-0496">Mitochondrion</keyword>
<keyword id="KW-1185">Reference proteome</keyword>
<keyword id="KW-0677">Repeat</keyword>
<keyword id="KW-0809">Transit peptide</keyword>
<comment type="subcellular location">
    <subcellularLocation>
        <location evidence="2">Mitochondrion</location>
    </subcellularLocation>
</comment>
<comment type="similarity">
    <text evidence="2">Belongs to the PPR family. P subfamily.</text>
</comment>
<comment type="online information" name="Pentatricopeptide repeat proteins">
    <link uri="https://ppr.plantenergy.uwa.edu.au"/>
</comment>
<protein>
    <recommendedName>
        <fullName>Pentatricopeptide repeat-containing protein At5g61990, mitochondrial</fullName>
    </recommendedName>
</protein>